<gene>
    <name evidence="1" type="primary">uvrB</name>
    <name type="ordered locus">CPF_0300</name>
</gene>
<name>UVRB_CLOP1</name>
<evidence type="ECO:0000255" key="1">
    <source>
        <dbReference type="HAMAP-Rule" id="MF_00204"/>
    </source>
</evidence>
<proteinExistence type="inferred from homology"/>
<feature type="chain" id="PRO_1000077880" description="UvrABC system protein B">
    <location>
        <begin position="1"/>
        <end position="659"/>
    </location>
</feature>
<feature type="domain" description="Helicase ATP-binding" evidence="1">
    <location>
        <begin position="25"/>
        <end position="182"/>
    </location>
</feature>
<feature type="domain" description="Helicase C-terminal" evidence="1">
    <location>
        <begin position="429"/>
        <end position="582"/>
    </location>
</feature>
<feature type="domain" description="UVR" evidence="1">
    <location>
        <begin position="622"/>
        <end position="657"/>
    </location>
</feature>
<feature type="short sequence motif" description="Beta-hairpin">
    <location>
        <begin position="91"/>
        <end position="114"/>
    </location>
</feature>
<feature type="binding site" evidence="1">
    <location>
        <begin position="38"/>
        <end position="45"/>
    </location>
    <ligand>
        <name>ATP</name>
        <dbReference type="ChEBI" id="CHEBI:30616"/>
    </ligand>
</feature>
<accession>Q0TUD0</accession>
<keyword id="KW-0067">ATP-binding</keyword>
<keyword id="KW-0963">Cytoplasm</keyword>
<keyword id="KW-0227">DNA damage</keyword>
<keyword id="KW-0228">DNA excision</keyword>
<keyword id="KW-0234">DNA repair</keyword>
<keyword id="KW-0267">Excision nuclease</keyword>
<keyword id="KW-0347">Helicase</keyword>
<keyword id="KW-0378">Hydrolase</keyword>
<keyword id="KW-0547">Nucleotide-binding</keyword>
<keyword id="KW-0742">SOS response</keyword>
<sequence length="659" mass="75536">MGEFKIQSKFKPTGDQPKAIDTLVQSIENGNRGQTLLGVTGSGKTFTMANIIERTQKPTLILAHNKTLAAQLCAEFKEFFPDNIVEYFVSYYDYYQPEAYVPQTDTFIEKDASINDEIDKLRHSATSALLERRDVIIVASVSCIYGLGNPEEYKKLTISLRPGMIKDRDEVIKKLIEIQYERNDIDFARGTFRVRGDNLDIIPSSSSSKGIRIEFFGDEIDRIREFDVLTGNIIGERQHVSITPASHFAASEETLEKSIRVIEDELEDRLKVLTAEDKILEAQRLKQRTNYDIEMIREMGYCQGIENYSRILDGRMPGTPPQTLLDYFPEDFLMFIDESHVTLPQVRAMYAGDRSRKTSLVEFGFRLPCAFDNRPLKFSEFESKINQVVFVSATPGEYELDHSKVVAEQIIRPTGLLDPVIEIRPIQGQIDDLYGEIQRTVQRGFRVLITTLTKRMAEDLTKYLKDLNVKATYMHSDIDTLERMKIIRELRLGEVDVLIGINLLREGLDIPEVALVAILDADKEGFLRSETSLIQTIGRAARNSESKVIMYADNITKSMDKSIKETERRRVIQMEYNEEHNITPTTVIKGVRDIIEATKVSEEKENYEDEVKKAAKKDIPVEKLIEQYEEEMKEAAKNLQFERAAELRDIIKDLKENSK</sequence>
<reference key="1">
    <citation type="journal article" date="2006" name="Genome Res.">
        <title>Skewed genomic variability in strains of the toxigenic bacterial pathogen, Clostridium perfringens.</title>
        <authorList>
            <person name="Myers G.S.A."/>
            <person name="Rasko D.A."/>
            <person name="Cheung J.K."/>
            <person name="Ravel J."/>
            <person name="Seshadri R."/>
            <person name="DeBoy R.T."/>
            <person name="Ren Q."/>
            <person name="Varga J."/>
            <person name="Awad M.M."/>
            <person name="Brinkac L.M."/>
            <person name="Daugherty S.C."/>
            <person name="Haft D.H."/>
            <person name="Dodson R.J."/>
            <person name="Madupu R."/>
            <person name="Nelson W.C."/>
            <person name="Rosovitz M.J."/>
            <person name="Sullivan S.A."/>
            <person name="Khouri H."/>
            <person name="Dimitrov G.I."/>
            <person name="Watkins K.L."/>
            <person name="Mulligan S."/>
            <person name="Benton J."/>
            <person name="Radune D."/>
            <person name="Fisher D.J."/>
            <person name="Atkins H.S."/>
            <person name="Hiscox T."/>
            <person name="Jost B.H."/>
            <person name="Billington S.J."/>
            <person name="Songer J.G."/>
            <person name="McClane B.A."/>
            <person name="Titball R.W."/>
            <person name="Rood J.I."/>
            <person name="Melville S.B."/>
            <person name="Paulsen I.T."/>
        </authorList>
    </citation>
    <scope>NUCLEOTIDE SEQUENCE [LARGE SCALE GENOMIC DNA]</scope>
    <source>
        <strain>ATCC 13124 / DSM 756 / JCM 1290 / NCIMB 6125 / NCTC 8237 / S 107 / Type A</strain>
    </source>
</reference>
<dbReference type="EMBL" id="CP000246">
    <property type="protein sequence ID" value="ABG82689.1"/>
    <property type="molecule type" value="Genomic_DNA"/>
</dbReference>
<dbReference type="RefSeq" id="WP_004457492.1">
    <property type="nucleotide sequence ID" value="NC_008261.1"/>
</dbReference>
<dbReference type="SMR" id="Q0TUD0"/>
<dbReference type="STRING" id="195103.CPF_0300"/>
<dbReference type="PaxDb" id="195103-CPF_0300"/>
<dbReference type="KEGG" id="cpf:CPF_0300"/>
<dbReference type="eggNOG" id="COG0556">
    <property type="taxonomic scope" value="Bacteria"/>
</dbReference>
<dbReference type="HOGENOM" id="CLU_009621_2_1_9"/>
<dbReference type="Proteomes" id="UP000001823">
    <property type="component" value="Chromosome"/>
</dbReference>
<dbReference type="GO" id="GO:0005737">
    <property type="term" value="C:cytoplasm"/>
    <property type="evidence" value="ECO:0007669"/>
    <property type="project" value="UniProtKB-SubCell"/>
</dbReference>
<dbReference type="GO" id="GO:0009380">
    <property type="term" value="C:excinuclease repair complex"/>
    <property type="evidence" value="ECO:0007669"/>
    <property type="project" value="InterPro"/>
</dbReference>
<dbReference type="GO" id="GO:0005524">
    <property type="term" value="F:ATP binding"/>
    <property type="evidence" value="ECO:0007669"/>
    <property type="project" value="UniProtKB-UniRule"/>
</dbReference>
<dbReference type="GO" id="GO:0016887">
    <property type="term" value="F:ATP hydrolysis activity"/>
    <property type="evidence" value="ECO:0007669"/>
    <property type="project" value="InterPro"/>
</dbReference>
<dbReference type="GO" id="GO:0003677">
    <property type="term" value="F:DNA binding"/>
    <property type="evidence" value="ECO:0007669"/>
    <property type="project" value="UniProtKB-UniRule"/>
</dbReference>
<dbReference type="GO" id="GO:0009381">
    <property type="term" value="F:excinuclease ABC activity"/>
    <property type="evidence" value="ECO:0007669"/>
    <property type="project" value="UniProtKB-UniRule"/>
</dbReference>
<dbReference type="GO" id="GO:0004386">
    <property type="term" value="F:helicase activity"/>
    <property type="evidence" value="ECO:0007669"/>
    <property type="project" value="UniProtKB-KW"/>
</dbReference>
<dbReference type="GO" id="GO:0006289">
    <property type="term" value="P:nucleotide-excision repair"/>
    <property type="evidence" value="ECO:0007669"/>
    <property type="project" value="UniProtKB-UniRule"/>
</dbReference>
<dbReference type="GO" id="GO:0009432">
    <property type="term" value="P:SOS response"/>
    <property type="evidence" value="ECO:0007669"/>
    <property type="project" value="UniProtKB-UniRule"/>
</dbReference>
<dbReference type="CDD" id="cd17916">
    <property type="entry name" value="DEXHc_UvrB"/>
    <property type="match status" value="1"/>
</dbReference>
<dbReference type="CDD" id="cd18790">
    <property type="entry name" value="SF2_C_UvrB"/>
    <property type="match status" value="1"/>
</dbReference>
<dbReference type="Gene3D" id="3.40.50.300">
    <property type="entry name" value="P-loop containing nucleotide triphosphate hydrolases"/>
    <property type="match status" value="3"/>
</dbReference>
<dbReference type="Gene3D" id="4.10.860.10">
    <property type="entry name" value="UVR domain"/>
    <property type="match status" value="1"/>
</dbReference>
<dbReference type="HAMAP" id="MF_00204">
    <property type="entry name" value="UvrB"/>
    <property type="match status" value="1"/>
</dbReference>
<dbReference type="InterPro" id="IPR006935">
    <property type="entry name" value="Helicase/UvrB_N"/>
</dbReference>
<dbReference type="InterPro" id="IPR014001">
    <property type="entry name" value="Helicase_ATP-bd"/>
</dbReference>
<dbReference type="InterPro" id="IPR001650">
    <property type="entry name" value="Helicase_C-like"/>
</dbReference>
<dbReference type="InterPro" id="IPR027417">
    <property type="entry name" value="P-loop_NTPase"/>
</dbReference>
<dbReference type="InterPro" id="IPR001943">
    <property type="entry name" value="UVR_dom"/>
</dbReference>
<dbReference type="InterPro" id="IPR036876">
    <property type="entry name" value="UVR_dom_sf"/>
</dbReference>
<dbReference type="InterPro" id="IPR004807">
    <property type="entry name" value="UvrB"/>
</dbReference>
<dbReference type="InterPro" id="IPR041471">
    <property type="entry name" value="UvrB_inter"/>
</dbReference>
<dbReference type="InterPro" id="IPR024759">
    <property type="entry name" value="UvrB_YAD/RRR_dom"/>
</dbReference>
<dbReference type="NCBIfam" id="NF003673">
    <property type="entry name" value="PRK05298.1"/>
    <property type="match status" value="1"/>
</dbReference>
<dbReference type="NCBIfam" id="TIGR00631">
    <property type="entry name" value="uvrb"/>
    <property type="match status" value="1"/>
</dbReference>
<dbReference type="PANTHER" id="PTHR24029">
    <property type="entry name" value="UVRABC SYSTEM PROTEIN B"/>
    <property type="match status" value="1"/>
</dbReference>
<dbReference type="PANTHER" id="PTHR24029:SF0">
    <property type="entry name" value="UVRABC SYSTEM PROTEIN B"/>
    <property type="match status" value="1"/>
</dbReference>
<dbReference type="Pfam" id="PF00271">
    <property type="entry name" value="Helicase_C"/>
    <property type="match status" value="1"/>
</dbReference>
<dbReference type="Pfam" id="PF04851">
    <property type="entry name" value="ResIII"/>
    <property type="match status" value="1"/>
</dbReference>
<dbReference type="Pfam" id="PF02151">
    <property type="entry name" value="UVR"/>
    <property type="match status" value="1"/>
</dbReference>
<dbReference type="Pfam" id="PF12344">
    <property type="entry name" value="UvrB"/>
    <property type="match status" value="1"/>
</dbReference>
<dbReference type="Pfam" id="PF17757">
    <property type="entry name" value="UvrB_inter"/>
    <property type="match status" value="1"/>
</dbReference>
<dbReference type="SMART" id="SM00487">
    <property type="entry name" value="DEXDc"/>
    <property type="match status" value="1"/>
</dbReference>
<dbReference type="SMART" id="SM00490">
    <property type="entry name" value="HELICc"/>
    <property type="match status" value="1"/>
</dbReference>
<dbReference type="SUPFAM" id="SSF46600">
    <property type="entry name" value="C-terminal UvrC-binding domain of UvrB"/>
    <property type="match status" value="1"/>
</dbReference>
<dbReference type="SUPFAM" id="SSF52540">
    <property type="entry name" value="P-loop containing nucleoside triphosphate hydrolases"/>
    <property type="match status" value="2"/>
</dbReference>
<dbReference type="PROSITE" id="PS51192">
    <property type="entry name" value="HELICASE_ATP_BIND_1"/>
    <property type="match status" value="1"/>
</dbReference>
<dbReference type="PROSITE" id="PS51194">
    <property type="entry name" value="HELICASE_CTER"/>
    <property type="match status" value="1"/>
</dbReference>
<dbReference type="PROSITE" id="PS50151">
    <property type="entry name" value="UVR"/>
    <property type="match status" value="1"/>
</dbReference>
<protein>
    <recommendedName>
        <fullName evidence="1">UvrABC system protein B</fullName>
        <shortName evidence="1">Protein UvrB</shortName>
    </recommendedName>
    <alternativeName>
        <fullName evidence="1">Excinuclease ABC subunit B</fullName>
    </alternativeName>
</protein>
<comment type="function">
    <text evidence="1">The UvrABC repair system catalyzes the recognition and processing of DNA lesions. A damage recognition complex composed of 2 UvrA and 2 UvrB subunits scans DNA for abnormalities. Upon binding of the UvrA(2)B(2) complex to a putative damaged site, the DNA wraps around one UvrB monomer. DNA wrap is dependent on ATP binding by UvrB and probably causes local melting of the DNA helix, facilitating insertion of UvrB beta-hairpin between the DNA strands. Then UvrB probes one DNA strand for the presence of a lesion. If a lesion is found the UvrA subunits dissociate and the UvrB-DNA preincision complex is formed. This complex is subsequently bound by UvrC and the second UvrB is released. If no lesion is found, the DNA wraps around the other UvrB subunit that will check the other stand for damage.</text>
</comment>
<comment type="subunit">
    <text evidence="1">Forms a heterotetramer with UvrA during the search for lesions. Interacts with UvrC in an incision complex.</text>
</comment>
<comment type="subcellular location">
    <subcellularLocation>
        <location evidence="1">Cytoplasm</location>
    </subcellularLocation>
</comment>
<comment type="domain">
    <text evidence="1">The beta-hairpin motif is involved in DNA binding.</text>
</comment>
<comment type="similarity">
    <text evidence="1">Belongs to the UvrB family.</text>
</comment>
<organism>
    <name type="scientific">Clostridium perfringens (strain ATCC 13124 / DSM 756 / JCM 1290 / NCIMB 6125 / NCTC 8237 / Type A)</name>
    <dbReference type="NCBI Taxonomy" id="195103"/>
    <lineage>
        <taxon>Bacteria</taxon>
        <taxon>Bacillati</taxon>
        <taxon>Bacillota</taxon>
        <taxon>Clostridia</taxon>
        <taxon>Eubacteriales</taxon>
        <taxon>Clostridiaceae</taxon>
        <taxon>Clostridium</taxon>
    </lineage>
</organism>